<feature type="chain" id="PRO_0000369434" description="Cytochrome c oxidase subunit 6C">
    <location>
        <begin position="1"/>
        <end position="76"/>
    </location>
</feature>
<feature type="topological domain" description="Mitochondrial matrix" evidence="1">
    <location>
        <begin position="1"/>
        <end position="14"/>
    </location>
</feature>
<feature type="transmembrane region" description="Helical" evidence="1">
    <location>
        <begin position="15"/>
        <end position="55"/>
    </location>
</feature>
<feature type="topological domain" description="Mitochondrial intermembrane" evidence="1">
    <location>
        <begin position="56"/>
        <end position="76"/>
    </location>
</feature>
<gene>
    <name type="primary">COX6C</name>
</gene>
<keyword id="KW-0472">Membrane</keyword>
<keyword id="KW-0496">Mitochondrion</keyword>
<keyword id="KW-0999">Mitochondrion inner membrane</keyword>
<keyword id="KW-1185">Reference proteome</keyword>
<keyword id="KW-0812">Transmembrane</keyword>
<keyword id="KW-1133">Transmembrane helix</keyword>
<organism>
    <name type="scientific">Vicugna pacos</name>
    <name type="common">Alpaca</name>
    <name type="synonym">Lama pacos</name>
    <dbReference type="NCBI Taxonomy" id="30538"/>
    <lineage>
        <taxon>Eukaryota</taxon>
        <taxon>Metazoa</taxon>
        <taxon>Chordata</taxon>
        <taxon>Craniata</taxon>
        <taxon>Vertebrata</taxon>
        <taxon>Euteleostomi</taxon>
        <taxon>Mammalia</taxon>
        <taxon>Eutheria</taxon>
        <taxon>Laurasiatheria</taxon>
        <taxon>Artiodactyla</taxon>
        <taxon>Tylopoda</taxon>
        <taxon>Camelidae</taxon>
        <taxon>Vicugna</taxon>
    </lineage>
</organism>
<comment type="function">
    <text evidence="1">Component of the cytochrome c oxidase, the last enzyme in the mitochondrial electron transport chain which drives oxidative phosphorylation. The respiratory chain contains 3 multisubunit complexes succinate dehydrogenase (complex II, CII), ubiquinol-cytochrome c oxidoreductase (cytochrome b-c1 complex, complex III, CIII) and cytochrome c oxidase (complex IV, CIV), that cooperate to transfer electrons derived from NADH and succinate to molecular oxygen, creating an electrochemical gradient over the inner membrane that drives transmembrane transport and the ATP synthase. Cytochrome c oxidase is the component of the respiratory chain that catalyzes the reduction of oxygen to water. Electrons originating from reduced cytochrome c in the intermembrane space (IMS) are transferred via the dinuclear copper A center (CU(A)) of subunit 2 and heme A of subunit 1 to the active site in subunit 1, a binuclear center (BNC) formed by heme A3 and copper B (CU(B)). The BNC reduces molecular oxygen to 2 water molecules using 4 electrons from cytochrome c in the IMS and 4 protons from the mitochondrial matrix.</text>
</comment>
<comment type="pathway">
    <text evidence="1">Energy metabolism; oxidative phosphorylation.</text>
</comment>
<comment type="subunit">
    <text evidence="1">Component of the cytochrome c oxidase (complex IV, CIV), a multisubunit enzyme composed of 14 subunits. The complex is composed of a catalytic core of 3 subunits MT-CO1, MT-CO2 and MT-CO3, encoded in the mitochondrial DNA, and 11 supernumerary subunits COX4I, COX5A, COX5B, COX6A, COX6B, COX6C, COX7A, COX7B, COX7C, COX8 and NDUFA4, which are encoded in the nuclear genome. The complex exists as a monomer or a dimer and forms supercomplexes (SCs) in the inner mitochondrial membrane with NADH-ubiquinone oxidoreductase (complex I, CI) and ubiquinol-cytochrome c oxidoreductase (cytochrome b-c1 complex, complex III, CIII), resulting in different assemblies (supercomplex SCI(1)III(2)IV(1) and megacomplex MCI(2)III(2)IV(2)).</text>
</comment>
<comment type="subcellular location">
    <subcellularLocation>
        <location evidence="1">Mitochondrion inner membrane</location>
        <topology evidence="1">Single-pass membrane protein</topology>
    </subcellularLocation>
</comment>
<comment type="similarity">
    <text evidence="2">Belongs to the cytochrome c oxidase subunit 6c family.</text>
</comment>
<sequence>MSSGALLPKPQMRGLLAKRLRVHIVGAFVVALGVAAAYKFGVAEPRKKAYADFYRNYDSMKDFEEMRQAGVFQSAK</sequence>
<evidence type="ECO:0000250" key="1">
    <source>
        <dbReference type="UniProtKB" id="P04038"/>
    </source>
</evidence>
<evidence type="ECO:0000305" key="2"/>
<accession>Q0Q4Z0</accession>
<protein>
    <recommendedName>
        <fullName>Cytochrome c oxidase subunit 6C</fullName>
    </recommendedName>
    <alternativeName>
        <fullName>Cytochrome c oxidase polypeptide VIc</fullName>
    </alternativeName>
</protein>
<name>COX6C_VICPA</name>
<proteinExistence type="inferred from homology"/>
<dbReference type="EMBL" id="DQ646400">
    <property type="protein sequence ID" value="ABG66313.1"/>
    <property type="molecule type" value="mRNA"/>
</dbReference>
<dbReference type="SMR" id="Q0Q4Z0"/>
<dbReference type="FunCoup" id="Q0Q4Z0">
    <property type="interactions" value="875"/>
</dbReference>
<dbReference type="InParanoid" id="Q0Q4Z0"/>
<dbReference type="UniPathway" id="UPA00705"/>
<dbReference type="Proteomes" id="UP000504605">
    <property type="component" value="Unplaced"/>
</dbReference>
<dbReference type="GO" id="GO:0005743">
    <property type="term" value="C:mitochondrial inner membrane"/>
    <property type="evidence" value="ECO:0007669"/>
    <property type="project" value="UniProtKB-SubCell"/>
</dbReference>
<dbReference type="GO" id="GO:0006119">
    <property type="term" value="P:oxidative phosphorylation"/>
    <property type="evidence" value="ECO:0007669"/>
    <property type="project" value="UniProtKB-UniPathway"/>
</dbReference>
<dbReference type="CDD" id="cd22901">
    <property type="entry name" value="CcO_VIc"/>
    <property type="match status" value="1"/>
</dbReference>
<dbReference type="FunFam" id="4.10.93.10:FF:000001">
    <property type="entry name" value="Cytochrome c oxidase subunit 6C"/>
    <property type="match status" value="1"/>
</dbReference>
<dbReference type="Gene3D" id="4.10.93.10">
    <property type="entry name" value="Mitochondrial cytochrome c oxidase subunit VIc/VIIs"/>
    <property type="match status" value="1"/>
</dbReference>
<dbReference type="InterPro" id="IPR051389">
    <property type="entry name" value="Cytochrome_c_oxidase_VIc"/>
</dbReference>
<dbReference type="InterPro" id="IPR034884">
    <property type="entry name" value="Cytochrome_c_oxidase_VIc/VIIs"/>
</dbReference>
<dbReference type="InterPro" id="IPR037169">
    <property type="entry name" value="Cytochrome_c_oxidase_VIc_sf"/>
</dbReference>
<dbReference type="PANTHER" id="PTHR48416">
    <property type="entry name" value="CYTOCHROME C OXIDASE SUBUNIT 6C"/>
    <property type="match status" value="1"/>
</dbReference>
<dbReference type="PANTHER" id="PTHR48416:SF1">
    <property type="entry name" value="CYTOCHROME C OXIDASE SUBUNIT 6C"/>
    <property type="match status" value="1"/>
</dbReference>
<dbReference type="Pfam" id="PF02937">
    <property type="entry name" value="COX6C"/>
    <property type="match status" value="1"/>
</dbReference>
<dbReference type="SUPFAM" id="SSF81415">
    <property type="entry name" value="Mitochondrial cytochrome c oxidase subunit VIc"/>
    <property type="match status" value="1"/>
</dbReference>
<reference key="1">
    <citation type="submission" date="2006-05" db="EMBL/GenBank/DDBJ databases">
        <title>Sequencing and characterization of cytochrome c oxidase subunit VIc full-length cDNA of alpaca (Lama pacos) skin.</title>
        <authorList>
            <person name="Dong C.S."/>
            <person name="Fan R.W."/>
            <person name="Zhang W.Y."/>
            <person name="Zhu Z.W."/>
        </authorList>
    </citation>
    <scope>NUCLEOTIDE SEQUENCE [MRNA]</scope>
</reference>